<dbReference type="EC" id="2.4.2.4" evidence="1"/>
<dbReference type="EMBL" id="CP000606">
    <property type="protein sequence ID" value="ABO24680.1"/>
    <property type="molecule type" value="Genomic_DNA"/>
</dbReference>
<dbReference type="RefSeq" id="WP_011866611.1">
    <property type="nucleotide sequence ID" value="NC_009092.1"/>
</dbReference>
<dbReference type="SMR" id="A3QGT2"/>
<dbReference type="STRING" id="323850.Shew_2814"/>
<dbReference type="KEGG" id="slo:Shew_2814"/>
<dbReference type="eggNOG" id="COG0213">
    <property type="taxonomic scope" value="Bacteria"/>
</dbReference>
<dbReference type="HOGENOM" id="CLU_025040_0_1_6"/>
<dbReference type="OrthoDB" id="9763887at2"/>
<dbReference type="UniPathway" id="UPA00578">
    <property type="reaction ID" value="UER00638"/>
</dbReference>
<dbReference type="Proteomes" id="UP000001558">
    <property type="component" value="Chromosome"/>
</dbReference>
<dbReference type="GO" id="GO:0005829">
    <property type="term" value="C:cytosol"/>
    <property type="evidence" value="ECO:0007669"/>
    <property type="project" value="TreeGrafter"/>
</dbReference>
<dbReference type="GO" id="GO:0004645">
    <property type="term" value="F:1,4-alpha-oligoglucan phosphorylase activity"/>
    <property type="evidence" value="ECO:0007669"/>
    <property type="project" value="InterPro"/>
</dbReference>
<dbReference type="GO" id="GO:0009032">
    <property type="term" value="F:thymidine phosphorylase activity"/>
    <property type="evidence" value="ECO:0007669"/>
    <property type="project" value="UniProtKB-UniRule"/>
</dbReference>
<dbReference type="GO" id="GO:0006206">
    <property type="term" value="P:pyrimidine nucleobase metabolic process"/>
    <property type="evidence" value="ECO:0007669"/>
    <property type="project" value="InterPro"/>
</dbReference>
<dbReference type="GO" id="GO:0046104">
    <property type="term" value="P:thymidine metabolic process"/>
    <property type="evidence" value="ECO:0007669"/>
    <property type="project" value="UniProtKB-UniRule"/>
</dbReference>
<dbReference type="FunFam" id="3.40.1030.10:FF:000001">
    <property type="entry name" value="Thymidine phosphorylase"/>
    <property type="match status" value="1"/>
</dbReference>
<dbReference type="FunFam" id="3.90.1170.30:FF:000001">
    <property type="entry name" value="Thymidine phosphorylase"/>
    <property type="match status" value="1"/>
</dbReference>
<dbReference type="Gene3D" id="3.40.1030.10">
    <property type="entry name" value="Nucleoside phosphorylase/phosphoribosyltransferase catalytic domain"/>
    <property type="match status" value="1"/>
</dbReference>
<dbReference type="Gene3D" id="3.90.1170.30">
    <property type="entry name" value="Pyrimidine nucleoside phosphorylase-like, C-terminal domain"/>
    <property type="match status" value="1"/>
</dbReference>
<dbReference type="Gene3D" id="1.20.970.10">
    <property type="entry name" value="Transferase, Pyrimidine Nucleoside Phosphorylase, Chain C"/>
    <property type="match status" value="1"/>
</dbReference>
<dbReference type="HAMAP" id="MF_01628">
    <property type="entry name" value="Thymid_phosp"/>
    <property type="match status" value="1"/>
</dbReference>
<dbReference type="InterPro" id="IPR000312">
    <property type="entry name" value="Glycosyl_Trfase_fam3"/>
</dbReference>
<dbReference type="InterPro" id="IPR017459">
    <property type="entry name" value="Glycosyl_Trfase_fam3_N_dom"/>
</dbReference>
<dbReference type="InterPro" id="IPR036320">
    <property type="entry name" value="Glycosyl_Trfase_fam3_N_dom_sf"/>
</dbReference>
<dbReference type="InterPro" id="IPR035902">
    <property type="entry name" value="Nuc_phospho_transferase"/>
</dbReference>
<dbReference type="InterPro" id="IPR036566">
    <property type="entry name" value="PYNP-like_C_sf"/>
</dbReference>
<dbReference type="InterPro" id="IPR013102">
    <property type="entry name" value="PYNP_C"/>
</dbReference>
<dbReference type="InterPro" id="IPR018090">
    <property type="entry name" value="Pyrmidine_PPas_bac/euk"/>
</dbReference>
<dbReference type="InterPro" id="IPR017872">
    <property type="entry name" value="Pyrmidine_PPase_CS"/>
</dbReference>
<dbReference type="InterPro" id="IPR000053">
    <property type="entry name" value="Thymidine/pyrmidine_PPase"/>
</dbReference>
<dbReference type="InterPro" id="IPR013465">
    <property type="entry name" value="Thymidine_Pase"/>
</dbReference>
<dbReference type="NCBIfam" id="NF004490">
    <property type="entry name" value="PRK05820.1"/>
    <property type="match status" value="1"/>
</dbReference>
<dbReference type="NCBIfam" id="TIGR02643">
    <property type="entry name" value="T_phosphoryl"/>
    <property type="match status" value="1"/>
</dbReference>
<dbReference type="NCBIfam" id="TIGR02644">
    <property type="entry name" value="Y_phosphoryl"/>
    <property type="match status" value="1"/>
</dbReference>
<dbReference type="PANTHER" id="PTHR10515">
    <property type="entry name" value="THYMIDINE PHOSPHORYLASE"/>
    <property type="match status" value="1"/>
</dbReference>
<dbReference type="PANTHER" id="PTHR10515:SF0">
    <property type="entry name" value="THYMIDINE PHOSPHORYLASE"/>
    <property type="match status" value="1"/>
</dbReference>
<dbReference type="Pfam" id="PF02885">
    <property type="entry name" value="Glycos_trans_3N"/>
    <property type="match status" value="1"/>
</dbReference>
<dbReference type="Pfam" id="PF00591">
    <property type="entry name" value="Glycos_transf_3"/>
    <property type="match status" value="1"/>
</dbReference>
<dbReference type="Pfam" id="PF07831">
    <property type="entry name" value="PYNP_C"/>
    <property type="match status" value="1"/>
</dbReference>
<dbReference type="PIRSF" id="PIRSF000478">
    <property type="entry name" value="TP_PyNP"/>
    <property type="match status" value="1"/>
</dbReference>
<dbReference type="SMART" id="SM00941">
    <property type="entry name" value="PYNP_C"/>
    <property type="match status" value="1"/>
</dbReference>
<dbReference type="SUPFAM" id="SSF52418">
    <property type="entry name" value="Nucleoside phosphorylase/phosphoribosyltransferase catalytic domain"/>
    <property type="match status" value="1"/>
</dbReference>
<dbReference type="SUPFAM" id="SSF47648">
    <property type="entry name" value="Nucleoside phosphorylase/phosphoribosyltransferase N-terminal domain"/>
    <property type="match status" value="1"/>
</dbReference>
<dbReference type="SUPFAM" id="SSF54680">
    <property type="entry name" value="Pyrimidine nucleoside phosphorylase C-terminal domain"/>
    <property type="match status" value="1"/>
</dbReference>
<dbReference type="PROSITE" id="PS00647">
    <property type="entry name" value="THYMID_PHOSPHORYLASE"/>
    <property type="match status" value="1"/>
</dbReference>
<sequence>MFLAQEIIRKKRNGEVLSTQEIQFFVQGITNNTVSEGQIAALGMAVYFKDMNMDERIALTTAMRDSGTVLNWKNLGLDGPIIDKHSTGGVGDVISLMLGPMAAACGGYVPMISGRGLGHTGGTLDKFDAIPGYQTEPDSDLFRKVVKEAGVAIIGQTGDLVPADKRFYSIRDNTATVESISLITASILSKKLAAGLDALAMDVKVGSGAFMPTYEASEELARSITAVANGAGTKTTALLTDMNQVLASCAGNAVEVKEAVDFLTGAYRNPRLYEVTMGLCAEMLQLGGLAASEADAREKLNRVLDNGKAADIFGRMIAGLGGPADFIENYAKYLPQSQIIRPVYADRSGFAASMDTRELGLAVVTLGGGRRKPGDALDYSVGLTQVCALGDEITSDKPIAMVHAQSESAFEEAAAAVKKAIHIGDEAPEKTPEIYRYIRQSDL</sequence>
<gene>
    <name evidence="1" type="primary">deoA</name>
    <name type="ordered locus">Shew_2814</name>
</gene>
<keyword id="KW-0328">Glycosyltransferase</keyword>
<keyword id="KW-1185">Reference proteome</keyword>
<keyword id="KW-0808">Transferase</keyword>
<organism>
    <name type="scientific">Shewanella loihica (strain ATCC BAA-1088 / PV-4)</name>
    <dbReference type="NCBI Taxonomy" id="323850"/>
    <lineage>
        <taxon>Bacteria</taxon>
        <taxon>Pseudomonadati</taxon>
        <taxon>Pseudomonadota</taxon>
        <taxon>Gammaproteobacteria</taxon>
        <taxon>Alteromonadales</taxon>
        <taxon>Shewanellaceae</taxon>
        <taxon>Shewanella</taxon>
    </lineage>
</organism>
<feature type="chain" id="PRO_1000069670" description="Thymidine phosphorylase">
    <location>
        <begin position="1"/>
        <end position="443"/>
    </location>
</feature>
<evidence type="ECO:0000255" key="1">
    <source>
        <dbReference type="HAMAP-Rule" id="MF_01628"/>
    </source>
</evidence>
<proteinExistence type="inferred from homology"/>
<accession>A3QGT2</accession>
<reference key="1">
    <citation type="submission" date="2007-03" db="EMBL/GenBank/DDBJ databases">
        <title>Complete sequence of Shewanella loihica PV-4.</title>
        <authorList>
            <consortium name="US DOE Joint Genome Institute"/>
            <person name="Copeland A."/>
            <person name="Lucas S."/>
            <person name="Lapidus A."/>
            <person name="Barry K."/>
            <person name="Detter J.C."/>
            <person name="Glavina del Rio T."/>
            <person name="Hammon N."/>
            <person name="Israni S."/>
            <person name="Dalin E."/>
            <person name="Tice H."/>
            <person name="Pitluck S."/>
            <person name="Chain P."/>
            <person name="Malfatti S."/>
            <person name="Shin M."/>
            <person name="Vergez L."/>
            <person name="Schmutz J."/>
            <person name="Larimer F."/>
            <person name="Land M."/>
            <person name="Hauser L."/>
            <person name="Kyrpides N."/>
            <person name="Mikhailova N."/>
            <person name="Romine M.F."/>
            <person name="Serres G."/>
            <person name="Fredrickson J."/>
            <person name="Tiedje J."/>
            <person name="Richardson P."/>
        </authorList>
    </citation>
    <scope>NUCLEOTIDE SEQUENCE [LARGE SCALE GENOMIC DNA]</scope>
    <source>
        <strain>ATCC BAA-1088 / PV-4</strain>
    </source>
</reference>
<protein>
    <recommendedName>
        <fullName evidence="1">Thymidine phosphorylase</fullName>
        <ecNumber evidence="1">2.4.2.4</ecNumber>
    </recommendedName>
    <alternativeName>
        <fullName evidence="1">TdRPase</fullName>
    </alternativeName>
</protein>
<name>TYPH_SHELP</name>
<comment type="function">
    <text evidence="1">The enzymes which catalyze the reversible phosphorolysis of pyrimidine nucleosides are involved in the degradation of these compounds and in their utilization as carbon and energy sources, or in the rescue of pyrimidine bases for nucleotide synthesis.</text>
</comment>
<comment type="catalytic activity">
    <reaction evidence="1">
        <text>thymidine + phosphate = 2-deoxy-alpha-D-ribose 1-phosphate + thymine</text>
        <dbReference type="Rhea" id="RHEA:16037"/>
        <dbReference type="ChEBI" id="CHEBI:17748"/>
        <dbReference type="ChEBI" id="CHEBI:17821"/>
        <dbReference type="ChEBI" id="CHEBI:43474"/>
        <dbReference type="ChEBI" id="CHEBI:57259"/>
        <dbReference type="EC" id="2.4.2.4"/>
    </reaction>
</comment>
<comment type="pathway">
    <text evidence="1">Pyrimidine metabolism; dTMP biosynthesis via salvage pathway; dTMP from thymine: step 1/2.</text>
</comment>
<comment type="subunit">
    <text evidence="1">Homodimer.</text>
</comment>
<comment type="similarity">
    <text evidence="1">Belongs to the thymidine/pyrimidine-nucleoside phosphorylase family.</text>
</comment>